<dbReference type="EC" id="3.1.26.4" evidence="1"/>
<dbReference type="EMBL" id="AP009484">
    <property type="protein sequence ID" value="BAH17537.1"/>
    <property type="molecule type" value="Genomic_DNA"/>
</dbReference>
<dbReference type="RefSeq" id="WP_012656737.1">
    <property type="nucleotide sequence ID" value="NC_011999.1"/>
</dbReference>
<dbReference type="SMR" id="B9EBC6"/>
<dbReference type="STRING" id="458233.MCCL_0830"/>
<dbReference type="KEGG" id="mcl:MCCL_0830"/>
<dbReference type="eggNOG" id="COG0164">
    <property type="taxonomic scope" value="Bacteria"/>
</dbReference>
<dbReference type="HOGENOM" id="CLU_036532_2_1_9"/>
<dbReference type="OrthoDB" id="9803420at2"/>
<dbReference type="Proteomes" id="UP000001383">
    <property type="component" value="Chromosome"/>
</dbReference>
<dbReference type="GO" id="GO:0005737">
    <property type="term" value="C:cytoplasm"/>
    <property type="evidence" value="ECO:0007669"/>
    <property type="project" value="UniProtKB-SubCell"/>
</dbReference>
<dbReference type="GO" id="GO:0032299">
    <property type="term" value="C:ribonuclease H2 complex"/>
    <property type="evidence" value="ECO:0007669"/>
    <property type="project" value="TreeGrafter"/>
</dbReference>
<dbReference type="GO" id="GO:0030145">
    <property type="term" value="F:manganese ion binding"/>
    <property type="evidence" value="ECO:0007669"/>
    <property type="project" value="UniProtKB-UniRule"/>
</dbReference>
<dbReference type="GO" id="GO:0003723">
    <property type="term" value="F:RNA binding"/>
    <property type="evidence" value="ECO:0007669"/>
    <property type="project" value="InterPro"/>
</dbReference>
<dbReference type="GO" id="GO:0004523">
    <property type="term" value="F:RNA-DNA hybrid ribonuclease activity"/>
    <property type="evidence" value="ECO:0007669"/>
    <property type="project" value="UniProtKB-UniRule"/>
</dbReference>
<dbReference type="GO" id="GO:0043137">
    <property type="term" value="P:DNA replication, removal of RNA primer"/>
    <property type="evidence" value="ECO:0007669"/>
    <property type="project" value="TreeGrafter"/>
</dbReference>
<dbReference type="GO" id="GO:0006298">
    <property type="term" value="P:mismatch repair"/>
    <property type="evidence" value="ECO:0007669"/>
    <property type="project" value="TreeGrafter"/>
</dbReference>
<dbReference type="CDD" id="cd07182">
    <property type="entry name" value="RNase_HII_bacteria_HII_like"/>
    <property type="match status" value="1"/>
</dbReference>
<dbReference type="FunFam" id="3.30.420.10:FF:000006">
    <property type="entry name" value="Ribonuclease HII"/>
    <property type="match status" value="1"/>
</dbReference>
<dbReference type="Gene3D" id="3.30.420.10">
    <property type="entry name" value="Ribonuclease H-like superfamily/Ribonuclease H"/>
    <property type="match status" value="1"/>
</dbReference>
<dbReference type="HAMAP" id="MF_00052_B">
    <property type="entry name" value="RNase_HII_B"/>
    <property type="match status" value="1"/>
</dbReference>
<dbReference type="InterPro" id="IPR022898">
    <property type="entry name" value="RNase_HII"/>
</dbReference>
<dbReference type="InterPro" id="IPR001352">
    <property type="entry name" value="RNase_HII/HIII"/>
</dbReference>
<dbReference type="InterPro" id="IPR024567">
    <property type="entry name" value="RNase_HII/HIII_dom"/>
</dbReference>
<dbReference type="InterPro" id="IPR012337">
    <property type="entry name" value="RNaseH-like_sf"/>
</dbReference>
<dbReference type="InterPro" id="IPR036397">
    <property type="entry name" value="RNaseH_sf"/>
</dbReference>
<dbReference type="NCBIfam" id="NF000594">
    <property type="entry name" value="PRK00015.1-1"/>
    <property type="match status" value="1"/>
</dbReference>
<dbReference type="NCBIfam" id="NF000595">
    <property type="entry name" value="PRK00015.1-3"/>
    <property type="match status" value="1"/>
</dbReference>
<dbReference type="PANTHER" id="PTHR10954">
    <property type="entry name" value="RIBONUCLEASE H2 SUBUNIT A"/>
    <property type="match status" value="1"/>
</dbReference>
<dbReference type="PANTHER" id="PTHR10954:SF18">
    <property type="entry name" value="RIBONUCLEASE HII"/>
    <property type="match status" value="1"/>
</dbReference>
<dbReference type="Pfam" id="PF01351">
    <property type="entry name" value="RNase_HII"/>
    <property type="match status" value="1"/>
</dbReference>
<dbReference type="SUPFAM" id="SSF53098">
    <property type="entry name" value="Ribonuclease H-like"/>
    <property type="match status" value="1"/>
</dbReference>
<dbReference type="PROSITE" id="PS51975">
    <property type="entry name" value="RNASE_H_2"/>
    <property type="match status" value="1"/>
</dbReference>
<gene>
    <name evidence="1" type="primary">rnhB</name>
    <name type="ordered locus">MCCL_0830</name>
</gene>
<comment type="function">
    <text evidence="1">Endonuclease that specifically degrades the RNA of RNA-DNA hybrids.</text>
</comment>
<comment type="catalytic activity">
    <reaction evidence="1">
        <text>Endonucleolytic cleavage to 5'-phosphomonoester.</text>
        <dbReference type="EC" id="3.1.26.4"/>
    </reaction>
</comment>
<comment type="cofactor">
    <cofactor evidence="1">
        <name>Mn(2+)</name>
        <dbReference type="ChEBI" id="CHEBI:29035"/>
    </cofactor>
    <cofactor evidence="1">
        <name>Mg(2+)</name>
        <dbReference type="ChEBI" id="CHEBI:18420"/>
    </cofactor>
    <text evidence="1">Manganese or magnesium. Binds 1 divalent metal ion per monomer in the absence of substrate. May bind a second metal ion after substrate binding.</text>
</comment>
<comment type="subcellular location">
    <subcellularLocation>
        <location evidence="1">Cytoplasm</location>
    </subcellularLocation>
</comment>
<comment type="similarity">
    <text evidence="1">Belongs to the RNase HII family.</text>
</comment>
<protein>
    <recommendedName>
        <fullName evidence="1">Ribonuclease HII</fullName>
        <shortName evidence="1">RNase HII</shortName>
        <ecNumber evidence="1">3.1.26.4</ecNumber>
    </recommendedName>
</protein>
<accession>B9EBC6</accession>
<reference key="1">
    <citation type="journal article" date="2009" name="J. Bacteriol.">
        <title>Complete genome sequence of Macrococcus caseolyticus strain JCSCS5402, reflecting the ancestral genome of the human-pathogenic staphylococci.</title>
        <authorList>
            <person name="Baba T."/>
            <person name="Kuwahara-Arai K."/>
            <person name="Uchiyama I."/>
            <person name="Takeuchi F."/>
            <person name="Ito T."/>
            <person name="Hiramatsu K."/>
        </authorList>
    </citation>
    <scope>NUCLEOTIDE SEQUENCE [LARGE SCALE GENOMIC DNA]</scope>
    <source>
        <strain>JCSC5402</strain>
    </source>
</reference>
<sequence>MKSNDYTIASLKEKVREMNQAELIDFFEEESRSGALKVKQARVKQIAQETQAIHEYEQMLEYERRYNGKVVCGIDEVGRGPLAGPVIACAVILNDGHHYIGLNDSKQLSKHKRASLYDALTQSVTYAIGAASVEEIDKFNIYEATKLAMHRAIDKLPVKPDVLLIDAMNLNTGLIEESIIKGDAKSVSIAAASVIAKVYRDHLMEEIHEEFPYYDFNRNAGYGTKRHLDGLMQYGITAHHRKSFEPIKSMIKTEENAKTITKPS</sequence>
<name>RNH2_MACCJ</name>
<proteinExistence type="inferred from homology"/>
<organism>
    <name type="scientific">Macrococcus caseolyticus (strain JCSC5402)</name>
    <name type="common">Macrococcoides caseolyticum</name>
    <dbReference type="NCBI Taxonomy" id="458233"/>
    <lineage>
        <taxon>Bacteria</taxon>
        <taxon>Bacillati</taxon>
        <taxon>Bacillota</taxon>
        <taxon>Bacilli</taxon>
        <taxon>Bacillales</taxon>
        <taxon>Staphylococcaceae</taxon>
        <taxon>Macrococcoides</taxon>
    </lineage>
</organism>
<keyword id="KW-0963">Cytoplasm</keyword>
<keyword id="KW-0255">Endonuclease</keyword>
<keyword id="KW-0378">Hydrolase</keyword>
<keyword id="KW-0464">Manganese</keyword>
<keyword id="KW-0479">Metal-binding</keyword>
<keyword id="KW-0540">Nuclease</keyword>
<keyword id="KW-1185">Reference proteome</keyword>
<feature type="chain" id="PRO_1000194456" description="Ribonuclease HII">
    <location>
        <begin position="1"/>
        <end position="264"/>
    </location>
</feature>
<feature type="domain" description="RNase H type-2" evidence="2">
    <location>
        <begin position="69"/>
        <end position="263"/>
    </location>
</feature>
<feature type="binding site" evidence="1">
    <location>
        <position position="75"/>
    </location>
    <ligand>
        <name>a divalent metal cation</name>
        <dbReference type="ChEBI" id="CHEBI:60240"/>
    </ligand>
</feature>
<feature type="binding site" evidence="1">
    <location>
        <position position="76"/>
    </location>
    <ligand>
        <name>a divalent metal cation</name>
        <dbReference type="ChEBI" id="CHEBI:60240"/>
    </ligand>
</feature>
<feature type="binding site" evidence="1">
    <location>
        <position position="166"/>
    </location>
    <ligand>
        <name>a divalent metal cation</name>
        <dbReference type="ChEBI" id="CHEBI:60240"/>
    </ligand>
</feature>
<evidence type="ECO:0000255" key="1">
    <source>
        <dbReference type="HAMAP-Rule" id="MF_00052"/>
    </source>
</evidence>
<evidence type="ECO:0000255" key="2">
    <source>
        <dbReference type="PROSITE-ProRule" id="PRU01319"/>
    </source>
</evidence>